<name>GUF1_NEUCR</name>
<feature type="transit peptide" description="Mitochondrion" evidence="1">
    <location>
        <begin position="1"/>
        <end position="75"/>
    </location>
</feature>
<feature type="chain" id="PRO_0000402894" description="Translation factor guf1, mitochondrial">
    <location>
        <begin position="76"/>
        <end position="719"/>
    </location>
</feature>
<feature type="domain" description="tr-type G">
    <location>
        <begin position="119"/>
        <end position="301"/>
    </location>
</feature>
<feature type="binding site" evidence="1">
    <location>
        <begin position="128"/>
        <end position="135"/>
    </location>
    <ligand>
        <name>GTP</name>
        <dbReference type="ChEBI" id="CHEBI:37565"/>
    </ligand>
</feature>
<feature type="binding site" evidence="1">
    <location>
        <begin position="194"/>
        <end position="198"/>
    </location>
    <ligand>
        <name>GTP</name>
        <dbReference type="ChEBI" id="CHEBI:37565"/>
    </ligand>
</feature>
<feature type="binding site" evidence="1">
    <location>
        <begin position="248"/>
        <end position="251"/>
    </location>
    <ligand>
        <name>GTP</name>
        <dbReference type="ChEBI" id="CHEBI:37565"/>
    </ligand>
</feature>
<dbReference type="EC" id="3.6.5.-"/>
<dbReference type="EMBL" id="CM002241">
    <property type="protein sequence ID" value="EAA28886.2"/>
    <property type="molecule type" value="Genomic_DNA"/>
</dbReference>
<dbReference type="RefSeq" id="XP_958122.2">
    <property type="nucleotide sequence ID" value="XM_953029.2"/>
</dbReference>
<dbReference type="SMR" id="Q7S0P6"/>
<dbReference type="FunCoup" id="Q7S0P6">
    <property type="interactions" value="695"/>
</dbReference>
<dbReference type="STRING" id="367110.Q7S0P6"/>
<dbReference type="PaxDb" id="5141-EFNCRP00000001374"/>
<dbReference type="EnsemblFungi" id="EAA28886">
    <property type="protein sequence ID" value="EAA28886"/>
    <property type="gene ID" value="NCU05927"/>
</dbReference>
<dbReference type="GeneID" id="3874269"/>
<dbReference type="KEGG" id="ncr:NCU05927"/>
<dbReference type="VEuPathDB" id="FungiDB:NCU05927"/>
<dbReference type="HOGENOM" id="CLU_009995_3_1_1"/>
<dbReference type="InParanoid" id="Q7S0P6"/>
<dbReference type="OrthoDB" id="1074at2759"/>
<dbReference type="Proteomes" id="UP000001805">
    <property type="component" value="Chromosome 5, Linkage Group VI"/>
</dbReference>
<dbReference type="GO" id="GO:0005743">
    <property type="term" value="C:mitochondrial inner membrane"/>
    <property type="evidence" value="ECO:0007669"/>
    <property type="project" value="UniProtKB-SubCell"/>
</dbReference>
<dbReference type="GO" id="GO:0005759">
    <property type="term" value="C:mitochondrial matrix"/>
    <property type="evidence" value="ECO:0007669"/>
    <property type="project" value="UniProtKB-UniRule"/>
</dbReference>
<dbReference type="GO" id="GO:0005739">
    <property type="term" value="C:mitochondrion"/>
    <property type="evidence" value="ECO:0000318"/>
    <property type="project" value="GO_Central"/>
</dbReference>
<dbReference type="GO" id="GO:0005525">
    <property type="term" value="F:GTP binding"/>
    <property type="evidence" value="ECO:0007669"/>
    <property type="project" value="UniProtKB-UniRule"/>
</dbReference>
<dbReference type="GO" id="GO:0003924">
    <property type="term" value="F:GTPase activity"/>
    <property type="evidence" value="ECO:0007669"/>
    <property type="project" value="UniProtKB-UniRule"/>
</dbReference>
<dbReference type="GO" id="GO:0097177">
    <property type="term" value="F:mitochondrial ribosome binding"/>
    <property type="evidence" value="ECO:0000318"/>
    <property type="project" value="GO_Central"/>
</dbReference>
<dbReference type="GO" id="GO:0045727">
    <property type="term" value="P:positive regulation of translation"/>
    <property type="evidence" value="ECO:0000318"/>
    <property type="project" value="GO_Central"/>
</dbReference>
<dbReference type="GO" id="GO:0006412">
    <property type="term" value="P:translation"/>
    <property type="evidence" value="ECO:0007669"/>
    <property type="project" value="UniProtKB-KW"/>
</dbReference>
<dbReference type="CDD" id="cd03699">
    <property type="entry name" value="EF4_II"/>
    <property type="match status" value="1"/>
</dbReference>
<dbReference type="CDD" id="cd16260">
    <property type="entry name" value="EF4_III"/>
    <property type="match status" value="1"/>
</dbReference>
<dbReference type="CDD" id="cd01890">
    <property type="entry name" value="LepA"/>
    <property type="match status" value="1"/>
</dbReference>
<dbReference type="CDD" id="cd03709">
    <property type="entry name" value="lepA_C"/>
    <property type="match status" value="1"/>
</dbReference>
<dbReference type="FunFam" id="3.40.50.300:FF:000078">
    <property type="entry name" value="Elongation factor 4"/>
    <property type="match status" value="1"/>
</dbReference>
<dbReference type="FunFam" id="2.40.30.10:FF:000015">
    <property type="entry name" value="Translation factor GUF1, mitochondrial"/>
    <property type="match status" value="1"/>
</dbReference>
<dbReference type="FunFam" id="3.30.70.240:FF:000007">
    <property type="entry name" value="Translation factor GUF1, mitochondrial"/>
    <property type="match status" value="1"/>
</dbReference>
<dbReference type="FunFam" id="3.30.70.2570:FF:000001">
    <property type="entry name" value="Translation factor GUF1, mitochondrial"/>
    <property type="match status" value="1"/>
</dbReference>
<dbReference type="FunFam" id="3.30.70.870:FF:000004">
    <property type="entry name" value="Translation factor GUF1, mitochondrial"/>
    <property type="match status" value="1"/>
</dbReference>
<dbReference type="Gene3D" id="3.30.70.240">
    <property type="match status" value="1"/>
</dbReference>
<dbReference type="Gene3D" id="3.30.70.2570">
    <property type="entry name" value="Elongation factor 4, C-terminal domain"/>
    <property type="match status" value="1"/>
</dbReference>
<dbReference type="Gene3D" id="3.30.70.870">
    <property type="entry name" value="Elongation Factor G (Translational Gtpase), domain 3"/>
    <property type="match status" value="1"/>
</dbReference>
<dbReference type="Gene3D" id="3.40.50.300">
    <property type="entry name" value="P-loop containing nucleotide triphosphate hydrolases"/>
    <property type="match status" value="1"/>
</dbReference>
<dbReference type="Gene3D" id="2.40.30.10">
    <property type="entry name" value="Translation factors"/>
    <property type="match status" value="1"/>
</dbReference>
<dbReference type="HAMAP" id="MF_00071">
    <property type="entry name" value="LepA"/>
    <property type="match status" value="1"/>
</dbReference>
<dbReference type="InterPro" id="IPR006297">
    <property type="entry name" value="EF-4"/>
</dbReference>
<dbReference type="InterPro" id="IPR035647">
    <property type="entry name" value="EFG_III/V"/>
</dbReference>
<dbReference type="InterPro" id="IPR000640">
    <property type="entry name" value="EFG_V-like"/>
</dbReference>
<dbReference type="InterPro" id="IPR004161">
    <property type="entry name" value="EFTu-like_2"/>
</dbReference>
<dbReference type="InterPro" id="IPR031157">
    <property type="entry name" value="G_TR_CS"/>
</dbReference>
<dbReference type="InterPro" id="IPR038363">
    <property type="entry name" value="LepA_C_sf"/>
</dbReference>
<dbReference type="InterPro" id="IPR013842">
    <property type="entry name" value="LepA_CTD"/>
</dbReference>
<dbReference type="InterPro" id="IPR035654">
    <property type="entry name" value="LepA_IV"/>
</dbReference>
<dbReference type="InterPro" id="IPR027417">
    <property type="entry name" value="P-loop_NTPase"/>
</dbReference>
<dbReference type="InterPro" id="IPR005225">
    <property type="entry name" value="Small_GTP-bd"/>
</dbReference>
<dbReference type="InterPro" id="IPR000795">
    <property type="entry name" value="T_Tr_GTP-bd_dom"/>
</dbReference>
<dbReference type="NCBIfam" id="TIGR01393">
    <property type="entry name" value="lepA"/>
    <property type="match status" value="1"/>
</dbReference>
<dbReference type="NCBIfam" id="TIGR00231">
    <property type="entry name" value="small_GTP"/>
    <property type="match status" value="1"/>
</dbReference>
<dbReference type="PANTHER" id="PTHR43512:SF7">
    <property type="entry name" value="TRANSLATION FACTOR GUF1, MITOCHONDRIAL"/>
    <property type="match status" value="1"/>
</dbReference>
<dbReference type="PANTHER" id="PTHR43512">
    <property type="entry name" value="TRANSLATION FACTOR GUF1-RELATED"/>
    <property type="match status" value="1"/>
</dbReference>
<dbReference type="Pfam" id="PF00679">
    <property type="entry name" value="EFG_C"/>
    <property type="match status" value="1"/>
</dbReference>
<dbReference type="Pfam" id="PF00009">
    <property type="entry name" value="GTP_EFTU"/>
    <property type="match status" value="1"/>
</dbReference>
<dbReference type="Pfam" id="PF03144">
    <property type="entry name" value="GTP_EFTU_D2"/>
    <property type="match status" value="1"/>
</dbReference>
<dbReference type="Pfam" id="PF06421">
    <property type="entry name" value="LepA_C"/>
    <property type="match status" value="1"/>
</dbReference>
<dbReference type="PRINTS" id="PR00315">
    <property type="entry name" value="ELONGATNFCT"/>
</dbReference>
<dbReference type="SUPFAM" id="SSF54980">
    <property type="entry name" value="EF-G C-terminal domain-like"/>
    <property type="match status" value="2"/>
</dbReference>
<dbReference type="SUPFAM" id="SSF52540">
    <property type="entry name" value="P-loop containing nucleoside triphosphate hydrolases"/>
    <property type="match status" value="1"/>
</dbReference>
<dbReference type="PROSITE" id="PS00301">
    <property type="entry name" value="G_TR_1"/>
    <property type="match status" value="1"/>
</dbReference>
<dbReference type="PROSITE" id="PS51722">
    <property type="entry name" value="G_TR_2"/>
    <property type="match status" value="1"/>
</dbReference>
<organism>
    <name type="scientific">Neurospora crassa (strain ATCC 24698 / 74-OR23-1A / CBS 708.71 / DSM 1257 / FGSC 987)</name>
    <dbReference type="NCBI Taxonomy" id="367110"/>
    <lineage>
        <taxon>Eukaryota</taxon>
        <taxon>Fungi</taxon>
        <taxon>Dikarya</taxon>
        <taxon>Ascomycota</taxon>
        <taxon>Pezizomycotina</taxon>
        <taxon>Sordariomycetes</taxon>
        <taxon>Sordariomycetidae</taxon>
        <taxon>Sordariales</taxon>
        <taxon>Sordariaceae</taxon>
        <taxon>Neurospora</taxon>
    </lineage>
</organism>
<sequence>MRGALCRPDVLMRPCLRPCARLPRLPPSRRLPFSITTSCQQLPRTSPGRAGFSSLASLESRQNDRTRCFSALRSLSSSQLLPTTAPVLARHNSTTATSQMPLERKAIEIEKRIAAIPLERYRNFCIVAHIDHGKSTLSDRLLEHTGTITAGDGNKQVLDKLDVERERGITVKAQTCTMIYKHRDGLDYLLHLVDTPGHVDFRAEVTRSYSSCSGALLLVDASQGVQAQTVANFYLAFAQGLSLVPVVNKIDMASADVPRVLEQLETVFELDTSTAVKVSAKTGQGVGEILPAVISNVPAPVGDAKKPLRMLLVDSWYDTFKGVVLLVRLFDGTLKQGDKVYSFATGNEYIVGEVGIQYPDAVPQKVLRAGQVGYVFFNPGMKRIQDAKLGDTFTNVGCEDTVEPLPGFEEPKPMVFVAAFPTNQDDYGRLADSIAHLVLNDRSVTLQKDYSEALGAGWRLGFLGSLHCSVFQDRLRQEHGASIIITEPAVPTKIIWSTGEELIVTNPAEFPDPDDHRIRSATLYEPFVNATVTLPEEYVGRCIEICENARGVQKSLEFFTATQVILKYELPAASLVDDLFGKLKGATKGYATLDYEDAGWRQAQLVKLNLLVNKKAVDAVARIVHVSQVERLGRQWVTKFKEHVDRQMFEVIIQAAAGRRIVARETIKPFRKDVLAKLHASDITRRRKLLEKQKAGRKRLRAVGNVIIDQSAFQKFLSK</sequence>
<accession>Q7S0P6</accession>
<gene>
    <name type="primary">guf1</name>
    <name type="ORF">NCU05927</name>
</gene>
<keyword id="KW-0342">GTP-binding</keyword>
<keyword id="KW-0378">Hydrolase</keyword>
<keyword id="KW-0472">Membrane</keyword>
<keyword id="KW-0496">Mitochondrion</keyword>
<keyword id="KW-0999">Mitochondrion inner membrane</keyword>
<keyword id="KW-0547">Nucleotide-binding</keyword>
<keyword id="KW-0648">Protein biosynthesis</keyword>
<keyword id="KW-1185">Reference proteome</keyword>
<keyword id="KW-0809">Transit peptide</keyword>
<comment type="function">
    <text evidence="1">Promotes mitochondrial protein synthesis. May act as a fidelity factor of the translation reaction, by catalyzing a one-codon backward translocation of tRNAs on improperly translocated ribosomes. Binds to mitochondrial ribosomes in a GTP-dependent manner.</text>
</comment>
<comment type="catalytic activity">
    <reaction evidence="1">
        <text>GTP + H2O = GDP + phosphate + H(+)</text>
        <dbReference type="Rhea" id="RHEA:19669"/>
        <dbReference type="ChEBI" id="CHEBI:15377"/>
        <dbReference type="ChEBI" id="CHEBI:15378"/>
        <dbReference type="ChEBI" id="CHEBI:37565"/>
        <dbReference type="ChEBI" id="CHEBI:43474"/>
        <dbReference type="ChEBI" id="CHEBI:58189"/>
    </reaction>
</comment>
<comment type="subcellular location">
    <subcellularLocation>
        <location evidence="1">Mitochondrion inner membrane</location>
        <topology evidence="1">Peripheral membrane protein</topology>
        <orientation evidence="1">Matrix side</orientation>
    </subcellularLocation>
</comment>
<comment type="similarity">
    <text evidence="2">Belongs to the TRAFAC class translation factor GTPase superfamily. Classic translation factor GTPase family. LepA subfamily.</text>
</comment>
<evidence type="ECO:0000255" key="1">
    <source>
        <dbReference type="HAMAP-Rule" id="MF_03137"/>
    </source>
</evidence>
<evidence type="ECO:0000305" key="2"/>
<protein>
    <recommendedName>
        <fullName evidence="1">Translation factor guf1, mitochondrial</fullName>
        <ecNumber>3.6.5.-</ecNumber>
    </recommendedName>
    <alternativeName>
        <fullName evidence="1">Elongation factor 4 homolog</fullName>
        <shortName evidence="1">EF-4</shortName>
    </alternativeName>
    <alternativeName>
        <fullName evidence="1">GTPase guf1</fullName>
    </alternativeName>
    <alternativeName>
        <fullName evidence="1">Ribosomal back-translocase</fullName>
    </alternativeName>
</protein>
<reference key="1">
    <citation type="journal article" date="2003" name="Nature">
        <title>The genome sequence of the filamentous fungus Neurospora crassa.</title>
        <authorList>
            <person name="Galagan J.E."/>
            <person name="Calvo S.E."/>
            <person name="Borkovich K.A."/>
            <person name="Selker E.U."/>
            <person name="Read N.D."/>
            <person name="Jaffe D.B."/>
            <person name="FitzHugh W."/>
            <person name="Ma L.-J."/>
            <person name="Smirnov S."/>
            <person name="Purcell S."/>
            <person name="Rehman B."/>
            <person name="Elkins T."/>
            <person name="Engels R."/>
            <person name="Wang S."/>
            <person name="Nielsen C.B."/>
            <person name="Butler J."/>
            <person name="Endrizzi M."/>
            <person name="Qui D."/>
            <person name="Ianakiev P."/>
            <person name="Bell-Pedersen D."/>
            <person name="Nelson M.A."/>
            <person name="Werner-Washburne M."/>
            <person name="Selitrennikoff C.P."/>
            <person name="Kinsey J.A."/>
            <person name="Braun E.L."/>
            <person name="Zelter A."/>
            <person name="Schulte U."/>
            <person name="Kothe G.O."/>
            <person name="Jedd G."/>
            <person name="Mewes H.-W."/>
            <person name="Staben C."/>
            <person name="Marcotte E."/>
            <person name="Greenberg D."/>
            <person name="Roy A."/>
            <person name="Foley K."/>
            <person name="Naylor J."/>
            <person name="Stange-Thomann N."/>
            <person name="Barrett R."/>
            <person name="Gnerre S."/>
            <person name="Kamal M."/>
            <person name="Kamvysselis M."/>
            <person name="Mauceli E.W."/>
            <person name="Bielke C."/>
            <person name="Rudd S."/>
            <person name="Frishman D."/>
            <person name="Krystofova S."/>
            <person name="Rasmussen C."/>
            <person name="Metzenberg R.L."/>
            <person name="Perkins D.D."/>
            <person name="Kroken S."/>
            <person name="Cogoni C."/>
            <person name="Macino G."/>
            <person name="Catcheside D.E.A."/>
            <person name="Li W."/>
            <person name="Pratt R.J."/>
            <person name="Osmani S.A."/>
            <person name="DeSouza C.P.C."/>
            <person name="Glass N.L."/>
            <person name="Orbach M.J."/>
            <person name="Berglund J.A."/>
            <person name="Voelker R."/>
            <person name="Yarden O."/>
            <person name="Plamann M."/>
            <person name="Seiler S."/>
            <person name="Dunlap J.C."/>
            <person name="Radford A."/>
            <person name="Aramayo R."/>
            <person name="Natvig D.O."/>
            <person name="Alex L.A."/>
            <person name="Mannhaupt G."/>
            <person name="Ebbole D.J."/>
            <person name="Freitag M."/>
            <person name="Paulsen I."/>
            <person name="Sachs M.S."/>
            <person name="Lander E.S."/>
            <person name="Nusbaum C."/>
            <person name="Birren B.W."/>
        </authorList>
    </citation>
    <scope>NUCLEOTIDE SEQUENCE [LARGE SCALE GENOMIC DNA]</scope>
    <source>
        <strain>ATCC 24698 / 74-OR23-1A / CBS 708.71 / DSM 1257 / FGSC 987</strain>
    </source>
</reference>
<proteinExistence type="inferred from homology"/>